<evidence type="ECO:0000255" key="1">
    <source>
        <dbReference type="HAMAP-Rule" id="MF_00182"/>
    </source>
</evidence>
<evidence type="ECO:0000305" key="2"/>
<reference key="1">
    <citation type="journal article" date="2001" name="Nucleic Acids Res.">
        <title>The complete genome sequence of the murine respiratory pathogen Mycoplasma pulmonis.</title>
        <authorList>
            <person name="Chambaud I."/>
            <person name="Heilig R."/>
            <person name="Ferris S."/>
            <person name="Barbe V."/>
            <person name="Samson D."/>
            <person name="Galisson F."/>
            <person name="Moszer I."/>
            <person name="Dybvig K."/>
            <person name="Wroblewski H."/>
            <person name="Viari A."/>
            <person name="Rocha E.P.C."/>
            <person name="Blanchard A."/>
        </authorList>
    </citation>
    <scope>NUCLEOTIDE SEQUENCE [LARGE SCALE GENOMIC DNA]</scope>
    <source>
        <strain>UAB CTIP</strain>
    </source>
</reference>
<sequence length="289" mass="32940">MKLLLAGTPEFSVPIFEELIKKFEIVAIITQPDKPKNRGYSLEASPVKKLAQKYDIKVYDPEKISTIYDQIKDLEFDFFLTAAYGQYIPEKILNLPKIASLNVHGSLLPKYRGAAPIQHALLNGDDETGISLIYMTKKMDAGNILKIAKIKLNGNENADDLFLQMSKIASKNIVLWLEQIYQKDFSEIVQDEEKVSLSPKLLKEDALLEVDKLSVKDFINKVRAFSLNPGAYLIKDGKRVKIFRATTSLVKNAFVVEVQGQKIYCYEYQFEGKKRVKLNFNLLFFNSVI</sequence>
<protein>
    <recommendedName>
        <fullName evidence="1">Methionyl-tRNA formyltransferase</fullName>
        <ecNumber evidence="1">2.1.2.9</ecNumber>
    </recommendedName>
</protein>
<organism>
    <name type="scientific">Mycoplasmopsis pulmonis (strain UAB CTIP)</name>
    <name type="common">Mycoplasma pulmonis</name>
    <dbReference type="NCBI Taxonomy" id="272635"/>
    <lineage>
        <taxon>Bacteria</taxon>
        <taxon>Bacillati</taxon>
        <taxon>Mycoplasmatota</taxon>
        <taxon>Mycoplasmoidales</taxon>
        <taxon>Metamycoplasmataceae</taxon>
        <taxon>Mycoplasmopsis</taxon>
    </lineage>
</organism>
<keyword id="KW-0648">Protein biosynthesis</keyword>
<keyword id="KW-1185">Reference proteome</keyword>
<keyword id="KW-0808">Transferase</keyword>
<name>FMT_MYCPU</name>
<dbReference type="EC" id="2.1.2.9" evidence="1"/>
<dbReference type="EMBL" id="AL445563">
    <property type="protein sequence ID" value="CAC13218.1"/>
    <property type="molecule type" value="Genomic_DNA"/>
</dbReference>
<dbReference type="PIR" id="E90517">
    <property type="entry name" value="E90517"/>
</dbReference>
<dbReference type="RefSeq" id="WP_010924849.1">
    <property type="nucleotide sequence ID" value="NC_002771.1"/>
</dbReference>
<dbReference type="SMR" id="Q98RG4"/>
<dbReference type="STRING" id="272635.gene:17576624"/>
<dbReference type="KEGG" id="mpu:MYPU_0450"/>
<dbReference type="eggNOG" id="COG0223">
    <property type="taxonomic scope" value="Bacteria"/>
</dbReference>
<dbReference type="HOGENOM" id="CLU_033347_1_1_14"/>
<dbReference type="BioCyc" id="MPUL272635:G1GT6-46-MONOMER"/>
<dbReference type="Proteomes" id="UP000000528">
    <property type="component" value="Chromosome"/>
</dbReference>
<dbReference type="GO" id="GO:0004479">
    <property type="term" value="F:methionyl-tRNA formyltransferase activity"/>
    <property type="evidence" value="ECO:0007669"/>
    <property type="project" value="UniProtKB-UniRule"/>
</dbReference>
<dbReference type="CDD" id="cd08646">
    <property type="entry name" value="FMT_core_Met-tRNA-FMT_N"/>
    <property type="match status" value="1"/>
</dbReference>
<dbReference type="CDD" id="cd08704">
    <property type="entry name" value="Met_tRNA_FMT_C"/>
    <property type="match status" value="1"/>
</dbReference>
<dbReference type="Gene3D" id="3.40.50.12230">
    <property type="match status" value="1"/>
</dbReference>
<dbReference type="HAMAP" id="MF_00182">
    <property type="entry name" value="Formyl_trans"/>
    <property type="match status" value="1"/>
</dbReference>
<dbReference type="InterPro" id="IPR005794">
    <property type="entry name" value="Fmt"/>
</dbReference>
<dbReference type="InterPro" id="IPR005793">
    <property type="entry name" value="Formyl_trans_C"/>
</dbReference>
<dbReference type="InterPro" id="IPR002376">
    <property type="entry name" value="Formyl_transf_N"/>
</dbReference>
<dbReference type="InterPro" id="IPR036477">
    <property type="entry name" value="Formyl_transf_N_sf"/>
</dbReference>
<dbReference type="InterPro" id="IPR011034">
    <property type="entry name" value="Formyl_transferase-like_C_sf"/>
</dbReference>
<dbReference type="InterPro" id="IPR001555">
    <property type="entry name" value="GART_AS"/>
</dbReference>
<dbReference type="InterPro" id="IPR044135">
    <property type="entry name" value="Met-tRNA-FMT_C"/>
</dbReference>
<dbReference type="InterPro" id="IPR041711">
    <property type="entry name" value="Met-tRNA-FMT_N"/>
</dbReference>
<dbReference type="NCBIfam" id="TIGR00460">
    <property type="entry name" value="fmt"/>
    <property type="match status" value="1"/>
</dbReference>
<dbReference type="PANTHER" id="PTHR11138">
    <property type="entry name" value="METHIONYL-TRNA FORMYLTRANSFERASE"/>
    <property type="match status" value="1"/>
</dbReference>
<dbReference type="PANTHER" id="PTHR11138:SF5">
    <property type="entry name" value="METHIONYL-TRNA FORMYLTRANSFERASE, MITOCHONDRIAL"/>
    <property type="match status" value="1"/>
</dbReference>
<dbReference type="Pfam" id="PF02911">
    <property type="entry name" value="Formyl_trans_C"/>
    <property type="match status" value="1"/>
</dbReference>
<dbReference type="Pfam" id="PF00551">
    <property type="entry name" value="Formyl_trans_N"/>
    <property type="match status" value="1"/>
</dbReference>
<dbReference type="SUPFAM" id="SSF50486">
    <property type="entry name" value="FMT C-terminal domain-like"/>
    <property type="match status" value="1"/>
</dbReference>
<dbReference type="SUPFAM" id="SSF53328">
    <property type="entry name" value="Formyltransferase"/>
    <property type="match status" value="1"/>
</dbReference>
<dbReference type="PROSITE" id="PS00373">
    <property type="entry name" value="GART"/>
    <property type="match status" value="1"/>
</dbReference>
<comment type="function">
    <text evidence="1">Attaches a formyl group to the free amino group of methionyl-tRNA(fMet). The formyl group appears to play a dual role in the initiator identity of N-formylmethionyl-tRNA by promoting its recognition by IF2 and preventing the misappropriation of this tRNA by the elongation apparatus.</text>
</comment>
<comment type="catalytic activity">
    <reaction evidence="1">
        <text>L-methionyl-tRNA(fMet) + (6R)-10-formyltetrahydrofolate = N-formyl-L-methionyl-tRNA(fMet) + (6S)-5,6,7,8-tetrahydrofolate + H(+)</text>
        <dbReference type="Rhea" id="RHEA:24380"/>
        <dbReference type="Rhea" id="RHEA-COMP:9952"/>
        <dbReference type="Rhea" id="RHEA-COMP:9953"/>
        <dbReference type="ChEBI" id="CHEBI:15378"/>
        <dbReference type="ChEBI" id="CHEBI:57453"/>
        <dbReference type="ChEBI" id="CHEBI:78530"/>
        <dbReference type="ChEBI" id="CHEBI:78844"/>
        <dbReference type="ChEBI" id="CHEBI:195366"/>
        <dbReference type="EC" id="2.1.2.9"/>
    </reaction>
</comment>
<comment type="similarity">
    <text evidence="1 2">Belongs to the Fmt family.</text>
</comment>
<accession>Q98RG4</accession>
<gene>
    <name evidence="1" type="primary">fmt</name>
    <name type="ordered locus">MYPU_0450</name>
</gene>
<feature type="chain" id="PRO_0000082998" description="Methionyl-tRNA formyltransferase">
    <location>
        <begin position="1"/>
        <end position="289"/>
    </location>
</feature>
<feature type="binding site" evidence="1">
    <location>
        <begin position="106"/>
        <end position="109"/>
    </location>
    <ligand>
        <name>(6S)-5,6,7,8-tetrahydrofolate</name>
        <dbReference type="ChEBI" id="CHEBI:57453"/>
    </ligand>
</feature>
<proteinExistence type="inferred from homology"/>